<gene>
    <name evidence="1" type="primary">mobA</name>
    <name type="ordered locus">Rpic_0903</name>
</gene>
<reference key="1">
    <citation type="submission" date="2008-05" db="EMBL/GenBank/DDBJ databases">
        <title>Complete sequence of chromosome 1 of Ralstonia pickettii 12J.</title>
        <authorList>
            <person name="Lucas S."/>
            <person name="Copeland A."/>
            <person name="Lapidus A."/>
            <person name="Glavina del Rio T."/>
            <person name="Dalin E."/>
            <person name="Tice H."/>
            <person name="Bruce D."/>
            <person name="Goodwin L."/>
            <person name="Pitluck S."/>
            <person name="Meincke L."/>
            <person name="Brettin T."/>
            <person name="Detter J.C."/>
            <person name="Han C."/>
            <person name="Kuske C.R."/>
            <person name="Schmutz J."/>
            <person name="Larimer F."/>
            <person name="Land M."/>
            <person name="Hauser L."/>
            <person name="Kyrpides N."/>
            <person name="Mikhailova N."/>
            <person name="Marsh T."/>
            <person name="Richardson P."/>
        </authorList>
    </citation>
    <scope>NUCLEOTIDE SEQUENCE [LARGE SCALE GENOMIC DNA]</scope>
    <source>
        <strain>12J</strain>
    </source>
</reference>
<dbReference type="EC" id="2.7.7.77" evidence="1"/>
<dbReference type="EMBL" id="CP001068">
    <property type="protein sequence ID" value="ACD26053.1"/>
    <property type="molecule type" value="Genomic_DNA"/>
</dbReference>
<dbReference type="SMR" id="B2U956"/>
<dbReference type="STRING" id="402626.Rpic_0903"/>
<dbReference type="KEGG" id="rpi:Rpic_0903"/>
<dbReference type="eggNOG" id="COG0746">
    <property type="taxonomic scope" value="Bacteria"/>
</dbReference>
<dbReference type="HOGENOM" id="CLU_055597_5_1_4"/>
<dbReference type="GO" id="GO:0005737">
    <property type="term" value="C:cytoplasm"/>
    <property type="evidence" value="ECO:0007669"/>
    <property type="project" value="UniProtKB-SubCell"/>
</dbReference>
<dbReference type="GO" id="GO:0005525">
    <property type="term" value="F:GTP binding"/>
    <property type="evidence" value="ECO:0007669"/>
    <property type="project" value="UniProtKB-UniRule"/>
</dbReference>
<dbReference type="GO" id="GO:0046872">
    <property type="term" value="F:metal ion binding"/>
    <property type="evidence" value="ECO:0007669"/>
    <property type="project" value="UniProtKB-KW"/>
</dbReference>
<dbReference type="GO" id="GO:0061603">
    <property type="term" value="F:molybdenum cofactor guanylyltransferase activity"/>
    <property type="evidence" value="ECO:0007669"/>
    <property type="project" value="UniProtKB-EC"/>
</dbReference>
<dbReference type="GO" id="GO:1902758">
    <property type="term" value="P:bis(molybdopterin guanine dinucleotide)molybdenum biosynthetic process"/>
    <property type="evidence" value="ECO:0007669"/>
    <property type="project" value="TreeGrafter"/>
</dbReference>
<dbReference type="CDD" id="cd02503">
    <property type="entry name" value="MobA"/>
    <property type="match status" value="1"/>
</dbReference>
<dbReference type="Gene3D" id="3.90.550.10">
    <property type="entry name" value="Spore Coat Polysaccharide Biosynthesis Protein SpsA, Chain A"/>
    <property type="match status" value="1"/>
</dbReference>
<dbReference type="HAMAP" id="MF_00316">
    <property type="entry name" value="MobA"/>
    <property type="match status" value="1"/>
</dbReference>
<dbReference type="InterPro" id="IPR025877">
    <property type="entry name" value="MobA-like_NTP_Trfase"/>
</dbReference>
<dbReference type="InterPro" id="IPR013482">
    <property type="entry name" value="Molybde_CF_guanTrfase"/>
</dbReference>
<dbReference type="InterPro" id="IPR029044">
    <property type="entry name" value="Nucleotide-diphossugar_trans"/>
</dbReference>
<dbReference type="NCBIfam" id="TIGR02665">
    <property type="entry name" value="molyb_mobA"/>
    <property type="match status" value="1"/>
</dbReference>
<dbReference type="PANTHER" id="PTHR19136">
    <property type="entry name" value="MOLYBDENUM COFACTOR GUANYLYLTRANSFERASE"/>
    <property type="match status" value="1"/>
</dbReference>
<dbReference type="PANTHER" id="PTHR19136:SF81">
    <property type="entry name" value="MOLYBDENUM COFACTOR GUANYLYLTRANSFERASE"/>
    <property type="match status" value="1"/>
</dbReference>
<dbReference type="Pfam" id="PF12804">
    <property type="entry name" value="NTP_transf_3"/>
    <property type="match status" value="1"/>
</dbReference>
<dbReference type="SUPFAM" id="SSF53448">
    <property type="entry name" value="Nucleotide-diphospho-sugar transferases"/>
    <property type="match status" value="1"/>
</dbReference>
<name>MOBA_RALPJ</name>
<comment type="function">
    <text evidence="1">Transfers a GMP moiety from GTP to Mo-molybdopterin (Mo-MPT) cofactor (Moco or molybdenum cofactor) to form Mo-molybdopterin guanine dinucleotide (Mo-MGD) cofactor.</text>
</comment>
<comment type="catalytic activity">
    <reaction evidence="1">
        <text>Mo-molybdopterin + GTP + H(+) = Mo-molybdopterin guanine dinucleotide + diphosphate</text>
        <dbReference type="Rhea" id="RHEA:34243"/>
        <dbReference type="ChEBI" id="CHEBI:15378"/>
        <dbReference type="ChEBI" id="CHEBI:33019"/>
        <dbReference type="ChEBI" id="CHEBI:37565"/>
        <dbReference type="ChEBI" id="CHEBI:71302"/>
        <dbReference type="ChEBI" id="CHEBI:71310"/>
        <dbReference type="EC" id="2.7.7.77"/>
    </reaction>
</comment>
<comment type="cofactor">
    <cofactor evidence="1">
        <name>Mg(2+)</name>
        <dbReference type="ChEBI" id="CHEBI:18420"/>
    </cofactor>
</comment>
<comment type="subunit">
    <text evidence="1">Monomer.</text>
</comment>
<comment type="subcellular location">
    <subcellularLocation>
        <location evidence="1">Cytoplasm</location>
    </subcellularLocation>
</comment>
<comment type="domain">
    <text evidence="1">The N-terminal domain determines nucleotide recognition and specific binding, while the C-terminal domain determines the specific binding to the target protein.</text>
</comment>
<comment type="similarity">
    <text evidence="1">Belongs to the MobA family.</text>
</comment>
<evidence type="ECO:0000255" key="1">
    <source>
        <dbReference type="HAMAP-Rule" id="MF_00316"/>
    </source>
</evidence>
<sequence>MIPTSDITGLILAGGRGSRMGGVDKGLQTFRGAPMAMHTLMRLSPQVGHMLINANRNLAAYESFGVPVVADSVPDFAGPLAGILAGLEQCQTRYLLTAPCDSPFVPTDLAAKLSQAMEEANARIAMPVTMEPDAQGQPRRQVQPVFCLIDALLADDLIVYLQGGGRKIETWTARHATVDVLFDDSTAFANINTLEELHQLAERR</sequence>
<protein>
    <recommendedName>
        <fullName evidence="1">Molybdenum cofactor guanylyltransferase</fullName>
        <shortName evidence="1">MoCo guanylyltransferase</shortName>
        <ecNumber evidence="1">2.7.7.77</ecNumber>
    </recommendedName>
    <alternativeName>
        <fullName evidence="1">GTP:molybdopterin guanylyltransferase</fullName>
    </alternativeName>
    <alternativeName>
        <fullName evidence="1">Mo-MPT guanylyltransferase</fullName>
    </alternativeName>
    <alternativeName>
        <fullName evidence="1">Molybdopterin guanylyltransferase</fullName>
    </alternativeName>
    <alternativeName>
        <fullName evidence="1">Molybdopterin-guanine dinucleotide synthase</fullName>
        <shortName evidence="1">MGD synthase</shortName>
    </alternativeName>
</protein>
<organism>
    <name type="scientific">Ralstonia pickettii (strain 12J)</name>
    <dbReference type="NCBI Taxonomy" id="402626"/>
    <lineage>
        <taxon>Bacteria</taxon>
        <taxon>Pseudomonadati</taxon>
        <taxon>Pseudomonadota</taxon>
        <taxon>Betaproteobacteria</taxon>
        <taxon>Burkholderiales</taxon>
        <taxon>Burkholderiaceae</taxon>
        <taxon>Ralstonia</taxon>
    </lineage>
</organism>
<accession>B2U956</accession>
<proteinExistence type="inferred from homology"/>
<feature type="chain" id="PRO_1000115808" description="Molybdenum cofactor guanylyltransferase">
    <location>
        <begin position="1"/>
        <end position="204"/>
    </location>
</feature>
<feature type="binding site" evidence="1">
    <location>
        <begin position="12"/>
        <end position="14"/>
    </location>
    <ligand>
        <name>GTP</name>
        <dbReference type="ChEBI" id="CHEBI:37565"/>
    </ligand>
</feature>
<feature type="binding site" evidence="1">
    <location>
        <position position="25"/>
    </location>
    <ligand>
        <name>GTP</name>
        <dbReference type="ChEBI" id="CHEBI:37565"/>
    </ligand>
</feature>
<feature type="binding site" evidence="1">
    <location>
        <position position="53"/>
    </location>
    <ligand>
        <name>GTP</name>
        <dbReference type="ChEBI" id="CHEBI:37565"/>
    </ligand>
</feature>
<feature type="binding site" evidence="1">
    <location>
        <position position="71"/>
    </location>
    <ligand>
        <name>GTP</name>
        <dbReference type="ChEBI" id="CHEBI:37565"/>
    </ligand>
</feature>
<feature type="binding site" evidence="1">
    <location>
        <position position="101"/>
    </location>
    <ligand>
        <name>GTP</name>
        <dbReference type="ChEBI" id="CHEBI:37565"/>
    </ligand>
</feature>
<feature type="binding site" evidence="1">
    <location>
        <position position="101"/>
    </location>
    <ligand>
        <name>Mg(2+)</name>
        <dbReference type="ChEBI" id="CHEBI:18420"/>
    </ligand>
</feature>
<keyword id="KW-0963">Cytoplasm</keyword>
<keyword id="KW-0342">GTP-binding</keyword>
<keyword id="KW-0460">Magnesium</keyword>
<keyword id="KW-0479">Metal-binding</keyword>
<keyword id="KW-0501">Molybdenum cofactor biosynthesis</keyword>
<keyword id="KW-0547">Nucleotide-binding</keyword>
<keyword id="KW-0808">Transferase</keyword>